<dbReference type="EC" id="7.6.2.14" evidence="1"/>
<dbReference type="EMBL" id="AM236080">
    <property type="protein sequence ID" value="CAK08256.1"/>
    <property type="molecule type" value="Genomic_DNA"/>
</dbReference>
<dbReference type="RefSeq" id="WP_011652298.1">
    <property type="nucleotide sequence ID" value="NC_008380.1"/>
</dbReference>
<dbReference type="SMR" id="Q1MFL8"/>
<dbReference type="EnsemblBacteria" id="CAK08256">
    <property type="protein sequence ID" value="CAK08256"/>
    <property type="gene ID" value="RL2767"/>
</dbReference>
<dbReference type="KEGG" id="rle:RL2767"/>
<dbReference type="eggNOG" id="COG1116">
    <property type="taxonomic scope" value="Bacteria"/>
</dbReference>
<dbReference type="HOGENOM" id="CLU_000604_1_22_5"/>
<dbReference type="Proteomes" id="UP000006575">
    <property type="component" value="Chromosome"/>
</dbReference>
<dbReference type="GO" id="GO:0005886">
    <property type="term" value="C:plasma membrane"/>
    <property type="evidence" value="ECO:0007669"/>
    <property type="project" value="UniProtKB-SubCell"/>
</dbReference>
<dbReference type="GO" id="GO:0005524">
    <property type="term" value="F:ATP binding"/>
    <property type="evidence" value="ECO:0007669"/>
    <property type="project" value="UniProtKB-KW"/>
</dbReference>
<dbReference type="GO" id="GO:0016887">
    <property type="term" value="F:ATP hydrolysis activity"/>
    <property type="evidence" value="ECO:0007669"/>
    <property type="project" value="InterPro"/>
</dbReference>
<dbReference type="Gene3D" id="3.40.50.300">
    <property type="entry name" value="P-loop containing nucleotide triphosphate hydrolases"/>
    <property type="match status" value="1"/>
</dbReference>
<dbReference type="InterPro" id="IPR003593">
    <property type="entry name" value="AAA+_ATPase"/>
</dbReference>
<dbReference type="InterPro" id="IPR003439">
    <property type="entry name" value="ABC_transporter-like_ATP-bd"/>
</dbReference>
<dbReference type="InterPro" id="IPR017871">
    <property type="entry name" value="ABC_transporter-like_CS"/>
</dbReference>
<dbReference type="InterPro" id="IPR050166">
    <property type="entry name" value="ABC_transporter_ATP-bind"/>
</dbReference>
<dbReference type="InterPro" id="IPR027417">
    <property type="entry name" value="P-loop_NTPase"/>
</dbReference>
<dbReference type="PANTHER" id="PTHR42788:SF17">
    <property type="entry name" value="ALIPHATIC SULFONATES IMPORT ATP-BINDING PROTEIN SSUB"/>
    <property type="match status" value="1"/>
</dbReference>
<dbReference type="PANTHER" id="PTHR42788">
    <property type="entry name" value="TAURINE IMPORT ATP-BINDING PROTEIN-RELATED"/>
    <property type="match status" value="1"/>
</dbReference>
<dbReference type="Pfam" id="PF00005">
    <property type="entry name" value="ABC_tran"/>
    <property type="match status" value="1"/>
</dbReference>
<dbReference type="SMART" id="SM00382">
    <property type="entry name" value="AAA"/>
    <property type="match status" value="1"/>
</dbReference>
<dbReference type="SUPFAM" id="SSF52540">
    <property type="entry name" value="P-loop containing nucleoside triphosphate hydrolases"/>
    <property type="match status" value="1"/>
</dbReference>
<dbReference type="PROSITE" id="PS00211">
    <property type="entry name" value="ABC_TRANSPORTER_1"/>
    <property type="match status" value="1"/>
</dbReference>
<dbReference type="PROSITE" id="PS50893">
    <property type="entry name" value="ABC_TRANSPORTER_2"/>
    <property type="match status" value="1"/>
</dbReference>
<dbReference type="PROSITE" id="PS51291">
    <property type="entry name" value="SSUB"/>
    <property type="match status" value="1"/>
</dbReference>
<comment type="function">
    <text evidence="1">Part of the ABC transporter complex SsuABC involved in aliphatic sulfonates import. Responsible for energy coupling to the transport system.</text>
</comment>
<comment type="catalytic activity">
    <reaction evidence="1">
        <text>ATP + H2O + aliphatic sulfonate-[sulfonate-binding protein]Side 1 = ADP + phosphate + aliphatic sulfonateSide 2 + [sulfonate-binding protein]Side 1.</text>
        <dbReference type="EC" id="7.6.2.14"/>
    </reaction>
</comment>
<comment type="subunit">
    <text evidence="1">The complex is composed of two ATP-binding proteins (SsuB), two transmembrane proteins (SsuC) and a solute-binding protein (SsuA).</text>
</comment>
<comment type="subcellular location">
    <subcellularLocation>
        <location evidence="1">Cell inner membrane</location>
        <topology evidence="1">Peripheral membrane protein</topology>
    </subcellularLocation>
</comment>
<comment type="similarity">
    <text evidence="1">Belongs to the ABC transporter superfamily. Aliphatic sulfonates importer (TC 3.A.1.17.2) family.</text>
</comment>
<protein>
    <recommendedName>
        <fullName evidence="1">Aliphatic sulfonates import ATP-binding protein SsuB 1</fullName>
        <ecNumber evidence="1">7.6.2.14</ecNumber>
    </recommendedName>
</protein>
<feature type="chain" id="PRO_0000279950" description="Aliphatic sulfonates import ATP-binding protein SsuB 1">
    <location>
        <begin position="1"/>
        <end position="275"/>
    </location>
</feature>
<feature type="domain" description="ABC transporter" evidence="1">
    <location>
        <begin position="34"/>
        <end position="260"/>
    </location>
</feature>
<feature type="binding site" evidence="1">
    <location>
        <begin position="66"/>
        <end position="73"/>
    </location>
    <ligand>
        <name>ATP</name>
        <dbReference type="ChEBI" id="CHEBI:30616"/>
    </ligand>
</feature>
<gene>
    <name evidence="1" type="primary">ssuB1</name>
    <name type="ordered locus">RL2767</name>
</gene>
<organism>
    <name type="scientific">Rhizobium johnstonii (strain DSM 114642 / LMG 32736 / 3841)</name>
    <name type="common">Rhizobium leguminosarum bv. viciae</name>
    <dbReference type="NCBI Taxonomy" id="216596"/>
    <lineage>
        <taxon>Bacteria</taxon>
        <taxon>Pseudomonadati</taxon>
        <taxon>Pseudomonadota</taxon>
        <taxon>Alphaproteobacteria</taxon>
        <taxon>Hyphomicrobiales</taxon>
        <taxon>Rhizobiaceae</taxon>
        <taxon>Rhizobium/Agrobacterium group</taxon>
        <taxon>Rhizobium</taxon>
        <taxon>Rhizobium johnstonii</taxon>
    </lineage>
</organism>
<accession>Q1MFL8</accession>
<name>SSUB1_RHIJ3</name>
<sequence length="275" mass="29252">MTSIAHERFHAVAEEPAYARENAPAVSRSAPAAISLTGLEKSFGGNRVLRGINLHIPAGQFVAVIGKSGCGKSTLLRILMGLDEPSAGELHFEDADGAQASPNARIVFQEPRLLPWLSVADNVVVGLGDGVDSRAAAKAAEAVLAEVQLGEKTEEWPARLSGGQRQRVALARALISRPGVLALDEPLGALDALTRISMQELINRVWRELGFTAVLVTHDVSEAVHLADRVIVLDEGRIALDLPIPHPRPRRHGHPGLCELEGRLLAAILGTDGGH</sequence>
<proteinExistence type="inferred from homology"/>
<keyword id="KW-0067">ATP-binding</keyword>
<keyword id="KW-0997">Cell inner membrane</keyword>
<keyword id="KW-1003">Cell membrane</keyword>
<keyword id="KW-0472">Membrane</keyword>
<keyword id="KW-0547">Nucleotide-binding</keyword>
<keyword id="KW-1278">Translocase</keyword>
<keyword id="KW-0813">Transport</keyword>
<evidence type="ECO:0000255" key="1">
    <source>
        <dbReference type="HAMAP-Rule" id="MF_01724"/>
    </source>
</evidence>
<reference key="1">
    <citation type="journal article" date="2006" name="Genome Biol.">
        <title>The genome of Rhizobium leguminosarum has recognizable core and accessory components.</title>
        <authorList>
            <person name="Young J.P.W."/>
            <person name="Crossman L.C."/>
            <person name="Johnston A.W.B."/>
            <person name="Thomson N.R."/>
            <person name="Ghazoui Z.F."/>
            <person name="Hull K.H."/>
            <person name="Wexler M."/>
            <person name="Curson A.R.J."/>
            <person name="Todd J.D."/>
            <person name="Poole P.S."/>
            <person name="Mauchline T.H."/>
            <person name="East A.K."/>
            <person name="Quail M.A."/>
            <person name="Churcher C."/>
            <person name="Arrowsmith C."/>
            <person name="Cherevach I."/>
            <person name="Chillingworth T."/>
            <person name="Clarke K."/>
            <person name="Cronin A."/>
            <person name="Davis P."/>
            <person name="Fraser A."/>
            <person name="Hance Z."/>
            <person name="Hauser H."/>
            <person name="Jagels K."/>
            <person name="Moule S."/>
            <person name="Mungall K."/>
            <person name="Norbertczak H."/>
            <person name="Rabbinowitsch E."/>
            <person name="Sanders M."/>
            <person name="Simmonds M."/>
            <person name="Whitehead S."/>
            <person name="Parkhill J."/>
        </authorList>
    </citation>
    <scope>NUCLEOTIDE SEQUENCE [LARGE SCALE GENOMIC DNA]</scope>
    <source>
        <strain>DSM 114642 / LMG 32736 / 3841</strain>
    </source>
</reference>